<dbReference type="EMBL" id="AE017340">
    <property type="protein sequence ID" value="AAV83472.1"/>
    <property type="molecule type" value="Genomic_DNA"/>
</dbReference>
<dbReference type="RefSeq" id="WP_011235863.1">
    <property type="nucleotide sequence ID" value="NC_006512.1"/>
</dbReference>
<dbReference type="SMR" id="Q5QZK0"/>
<dbReference type="STRING" id="283942.IL2640"/>
<dbReference type="GeneID" id="41337838"/>
<dbReference type="KEGG" id="ilo:IL2640"/>
<dbReference type="eggNOG" id="COG0230">
    <property type="taxonomic scope" value="Bacteria"/>
</dbReference>
<dbReference type="HOGENOM" id="CLU_129938_2_0_6"/>
<dbReference type="Proteomes" id="UP000001171">
    <property type="component" value="Chromosome"/>
</dbReference>
<dbReference type="GO" id="GO:1990904">
    <property type="term" value="C:ribonucleoprotein complex"/>
    <property type="evidence" value="ECO:0007669"/>
    <property type="project" value="UniProtKB-KW"/>
</dbReference>
<dbReference type="GO" id="GO:0005840">
    <property type="term" value="C:ribosome"/>
    <property type="evidence" value="ECO:0007669"/>
    <property type="project" value="UniProtKB-KW"/>
</dbReference>
<dbReference type="GO" id="GO:0003735">
    <property type="term" value="F:structural constituent of ribosome"/>
    <property type="evidence" value="ECO:0007669"/>
    <property type="project" value="InterPro"/>
</dbReference>
<dbReference type="GO" id="GO:0006412">
    <property type="term" value="P:translation"/>
    <property type="evidence" value="ECO:0007669"/>
    <property type="project" value="UniProtKB-UniRule"/>
</dbReference>
<dbReference type="FunFam" id="1.10.287.3980:FF:000001">
    <property type="entry name" value="Mitochondrial ribosomal protein L34"/>
    <property type="match status" value="1"/>
</dbReference>
<dbReference type="Gene3D" id="1.10.287.3980">
    <property type="match status" value="1"/>
</dbReference>
<dbReference type="HAMAP" id="MF_00391">
    <property type="entry name" value="Ribosomal_bL34"/>
    <property type="match status" value="1"/>
</dbReference>
<dbReference type="InterPro" id="IPR000271">
    <property type="entry name" value="Ribosomal_bL34"/>
</dbReference>
<dbReference type="InterPro" id="IPR020939">
    <property type="entry name" value="Ribosomal_bL34_CS"/>
</dbReference>
<dbReference type="NCBIfam" id="TIGR01030">
    <property type="entry name" value="rpmH_bact"/>
    <property type="match status" value="1"/>
</dbReference>
<dbReference type="PANTHER" id="PTHR14503:SF4">
    <property type="entry name" value="LARGE RIBOSOMAL SUBUNIT PROTEIN BL34M"/>
    <property type="match status" value="1"/>
</dbReference>
<dbReference type="PANTHER" id="PTHR14503">
    <property type="entry name" value="MITOCHONDRIAL RIBOSOMAL PROTEIN 34 FAMILY MEMBER"/>
    <property type="match status" value="1"/>
</dbReference>
<dbReference type="Pfam" id="PF00468">
    <property type="entry name" value="Ribosomal_L34"/>
    <property type="match status" value="1"/>
</dbReference>
<dbReference type="PROSITE" id="PS00784">
    <property type="entry name" value="RIBOSOMAL_L34"/>
    <property type="match status" value="1"/>
</dbReference>
<sequence>MKRTFQPSVLKRKRSHGFRARMATKNGRKVLARRRARGRKVLSA</sequence>
<gene>
    <name evidence="1" type="primary">rpmH</name>
    <name type="ordered locus">IL2640</name>
</gene>
<proteinExistence type="inferred from homology"/>
<reference key="1">
    <citation type="journal article" date="2004" name="Proc. Natl. Acad. Sci. U.S.A.">
        <title>Genome sequence of the deep-sea gamma-proteobacterium Idiomarina loihiensis reveals amino acid fermentation as a source of carbon and energy.</title>
        <authorList>
            <person name="Hou S."/>
            <person name="Saw J.H."/>
            <person name="Lee K.S."/>
            <person name="Freitas T.A."/>
            <person name="Belisle C."/>
            <person name="Kawarabayasi Y."/>
            <person name="Donachie S.P."/>
            <person name="Pikina A."/>
            <person name="Galperin M.Y."/>
            <person name="Koonin E.V."/>
            <person name="Makarova K.S."/>
            <person name="Omelchenko M.V."/>
            <person name="Sorokin A."/>
            <person name="Wolf Y.I."/>
            <person name="Li Q.X."/>
            <person name="Keum Y.S."/>
            <person name="Campbell S."/>
            <person name="Denery J."/>
            <person name="Aizawa S."/>
            <person name="Shibata S."/>
            <person name="Malahoff A."/>
            <person name="Alam M."/>
        </authorList>
    </citation>
    <scope>NUCLEOTIDE SEQUENCE [LARGE SCALE GENOMIC DNA]</scope>
    <source>
        <strain>ATCC BAA-735 / DSM 15497 / L2-TR</strain>
    </source>
</reference>
<organism>
    <name type="scientific">Idiomarina loihiensis (strain ATCC BAA-735 / DSM 15497 / L2-TR)</name>
    <dbReference type="NCBI Taxonomy" id="283942"/>
    <lineage>
        <taxon>Bacteria</taxon>
        <taxon>Pseudomonadati</taxon>
        <taxon>Pseudomonadota</taxon>
        <taxon>Gammaproteobacteria</taxon>
        <taxon>Alteromonadales</taxon>
        <taxon>Idiomarinaceae</taxon>
        <taxon>Idiomarina</taxon>
    </lineage>
</organism>
<feature type="chain" id="PRO_0000187394" description="Large ribosomal subunit protein bL34">
    <location>
        <begin position="1"/>
        <end position="44"/>
    </location>
</feature>
<keyword id="KW-1185">Reference proteome</keyword>
<keyword id="KW-0687">Ribonucleoprotein</keyword>
<keyword id="KW-0689">Ribosomal protein</keyword>
<accession>Q5QZK0</accession>
<comment type="similarity">
    <text evidence="1">Belongs to the bacterial ribosomal protein bL34 family.</text>
</comment>
<protein>
    <recommendedName>
        <fullName evidence="1">Large ribosomal subunit protein bL34</fullName>
    </recommendedName>
    <alternativeName>
        <fullName evidence="2">50S ribosomal protein L34</fullName>
    </alternativeName>
</protein>
<name>RL34_IDILO</name>
<evidence type="ECO:0000255" key="1">
    <source>
        <dbReference type="HAMAP-Rule" id="MF_00391"/>
    </source>
</evidence>
<evidence type="ECO:0000305" key="2"/>